<gene>
    <name evidence="1" type="primary">adk</name>
    <name type="ordered locus">DP1733</name>
</gene>
<comment type="function">
    <text evidence="1">Catalyzes the reversible transfer of the terminal phosphate group between ATP and AMP. Plays an important role in cellular energy homeostasis and in adenine nucleotide metabolism.</text>
</comment>
<comment type="catalytic activity">
    <reaction evidence="1">
        <text>AMP + ATP = 2 ADP</text>
        <dbReference type="Rhea" id="RHEA:12973"/>
        <dbReference type="ChEBI" id="CHEBI:30616"/>
        <dbReference type="ChEBI" id="CHEBI:456215"/>
        <dbReference type="ChEBI" id="CHEBI:456216"/>
        <dbReference type="EC" id="2.7.4.3"/>
    </reaction>
</comment>
<comment type="pathway">
    <text evidence="1">Purine metabolism; AMP biosynthesis via salvage pathway; AMP from ADP: step 1/1.</text>
</comment>
<comment type="subunit">
    <text evidence="1">Monomer.</text>
</comment>
<comment type="subcellular location">
    <subcellularLocation>
        <location evidence="1">Cytoplasm</location>
    </subcellularLocation>
</comment>
<comment type="domain">
    <text evidence="1">Consists of three domains, a large central CORE domain and two small peripheral domains, NMPbind and LID, which undergo movements during catalysis. The LID domain closes over the site of phosphoryl transfer upon ATP binding. Assembling and dissambling the active center during each catalytic cycle provides an effective means to prevent ATP hydrolysis.</text>
</comment>
<comment type="similarity">
    <text evidence="1">Belongs to the adenylate kinase family.</text>
</comment>
<organism>
    <name type="scientific">Desulfotalea psychrophila (strain LSv54 / DSM 12343)</name>
    <dbReference type="NCBI Taxonomy" id="177439"/>
    <lineage>
        <taxon>Bacteria</taxon>
        <taxon>Pseudomonadati</taxon>
        <taxon>Thermodesulfobacteriota</taxon>
        <taxon>Desulfobulbia</taxon>
        <taxon>Desulfobulbales</taxon>
        <taxon>Desulfocapsaceae</taxon>
        <taxon>Desulfotalea</taxon>
    </lineage>
</organism>
<name>KAD_DESPS</name>
<protein>
    <recommendedName>
        <fullName evidence="1">Adenylate kinase</fullName>
        <shortName evidence="1">AK</shortName>
        <ecNumber evidence="1">2.7.4.3</ecNumber>
    </recommendedName>
    <alternativeName>
        <fullName evidence="1">ATP-AMP transphosphorylase</fullName>
    </alternativeName>
    <alternativeName>
        <fullName evidence="1">ATP:AMP phosphotransferase</fullName>
    </alternativeName>
    <alternativeName>
        <fullName evidence="1">Adenylate monophosphate kinase</fullName>
    </alternativeName>
</protein>
<accession>Q6AMG3</accession>
<reference key="1">
    <citation type="journal article" date="2004" name="Environ. Microbiol.">
        <title>The genome of Desulfotalea psychrophila, a sulfate-reducing bacterium from permanently cold Arctic sediments.</title>
        <authorList>
            <person name="Rabus R."/>
            <person name="Ruepp A."/>
            <person name="Frickey T."/>
            <person name="Rattei T."/>
            <person name="Fartmann B."/>
            <person name="Stark M."/>
            <person name="Bauer M."/>
            <person name="Zibat A."/>
            <person name="Lombardot T."/>
            <person name="Becker I."/>
            <person name="Amann J."/>
            <person name="Gellner K."/>
            <person name="Teeling H."/>
            <person name="Leuschner W.D."/>
            <person name="Gloeckner F.-O."/>
            <person name="Lupas A.N."/>
            <person name="Amann R."/>
            <person name="Klenk H.-P."/>
        </authorList>
    </citation>
    <scope>NUCLEOTIDE SEQUENCE [LARGE SCALE GENOMIC DNA]</scope>
    <source>
        <strain>DSM 12343 / LSv54</strain>
    </source>
</reference>
<dbReference type="EC" id="2.7.4.3" evidence="1"/>
<dbReference type="EMBL" id="CR522870">
    <property type="protein sequence ID" value="CAG36462.1"/>
    <property type="molecule type" value="Genomic_DNA"/>
</dbReference>
<dbReference type="RefSeq" id="WP_011188974.1">
    <property type="nucleotide sequence ID" value="NC_006138.1"/>
</dbReference>
<dbReference type="SMR" id="Q6AMG3"/>
<dbReference type="STRING" id="177439.DP1733"/>
<dbReference type="KEGG" id="dps:DP1733"/>
<dbReference type="eggNOG" id="COG0563">
    <property type="taxonomic scope" value="Bacteria"/>
</dbReference>
<dbReference type="HOGENOM" id="CLU_032354_1_2_7"/>
<dbReference type="OrthoDB" id="9805030at2"/>
<dbReference type="UniPathway" id="UPA00588">
    <property type="reaction ID" value="UER00649"/>
</dbReference>
<dbReference type="Proteomes" id="UP000000602">
    <property type="component" value="Chromosome"/>
</dbReference>
<dbReference type="GO" id="GO:0005737">
    <property type="term" value="C:cytoplasm"/>
    <property type="evidence" value="ECO:0007669"/>
    <property type="project" value="UniProtKB-SubCell"/>
</dbReference>
<dbReference type="GO" id="GO:0004017">
    <property type="term" value="F:adenylate kinase activity"/>
    <property type="evidence" value="ECO:0007669"/>
    <property type="project" value="UniProtKB-UniRule"/>
</dbReference>
<dbReference type="GO" id="GO:0005524">
    <property type="term" value="F:ATP binding"/>
    <property type="evidence" value="ECO:0007669"/>
    <property type="project" value="UniProtKB-UniRule"/>
</dbReference>
<dbReference type="GO" id="GO:0044209">
    <property type="term" value="P:AMP salvage"/>
    <property type="evidence" value="ECO:0007669"/>
    <property type="project" value="UniProtKB-UniRule"/>
</dbReference>
<dbReference type="CDD" id="cd01428">
    <property type="entry name" value="ADK"/>
    <property type="match status" value="1"/>
</dbReference>
<dbReference type="Gene3D" id="3.40.50.300">
    <property type="entry name" value="P-loop containing nucleotide triphosphate hydrolases"/>
    <property type="match status" value="1"/>
</dbReference>
<dbReference type="HAMAP" id="MF_00235">
    <property type="entry name" value="Adenylate_kinase_Adk"/>
    <property type="match status" value="1"/>
</dbReference>
<dbReference type="InterPro" id="IPR000850">
    <property type="entry name" value="Adenylat/UMP-CMP_kin"/>
</dbReference>
<dbReference type="InterPro" id="IPR033690">
    <property type="entry name" value="Adenylat_kinase_CS"/>
</dbReference>
<dbReference type="InterPro" id="IPR027417">
    <property type="entry name" value="P-loop_NTPase"/>
</dbReference>
<dbReference type="NCBIfam" id="NF011102">
    <property type="entry name" value="PRK14529.1"/>
    <property type="match status" value="1"/>
</dbReference>
<dbReference type="PANTHER" id="PTHR23359">
    <property type="entry name" value="NUCLEOTIDE KINASE"/>
    <property type="match status" value="1"/>
</dbReference>
<dbReference type="Pfam" id="PF00406">
    <property type="entry name" value="ADK"/>
    <property type="match status" value="1"/>
</dbReference>
<dbReference type="PRINTS" id="PR00094">
    <property type="entry name" value="ADENYLTKNASE"/>
</dbReference>
<dbReference type="SUPFAM" id="SSF52540">
    <property type="entry name" value="P-loop containing nucleoside triphosphate hydrolases"/>
    <property type="match status" value="1"/>
</dbReference>
<dbReference type="PROSITE" id="PS00113">
    <property type="entry name" value="ADENYLATE_KINASE"/>
    <property type="match status" value="1"/>
</dbReference>
<evidence type="ECO:0000255" key="1">
    <source>
        <dbReference type="HAMAP-Rule" id="MF_00235"/>
    </source>
</evidence>
<keyword id="KW-0067">ATP-binding</keyword>
<keyword id="KW-0963">Cytoplasm</keyword>
<keyword id="KW-0418">Kinase</keyword>
<keyword id="KW-0545">Nucleotide biosynthesis</keyword>
<keyword id="KW-0547">Nucleotide-binding</keyword>
<keyword id="KW-1185">Reference proteome</keyword>
<keyword id="KW-0808">Transferase</keyword>
<sequence>MGKNILFFGPNGSGKGTQGAIVQKKYDIPHIESGAIFREHIGGGTELGLKAKEYIERGDLVPDEITIPMMVSRLQKDDCKKGWILDGFPRSKVQAITLAETLAKEGMALDYVIEIVLDRDIAKERIMGRRLCVNDNNHPNHIAFEAIKPVEKDGKLVCRVCGGDLKTRPDDQDVNAINKRHGIYYDEETGTMAAVNYFKNANGPKVISIDGSASIGEVTELIMKEL</sequence>
<proteinExistence type="inferred from homology"/>
<feature type="chain" id="PRO_0000158765" description="Adenylate kinase">
    <location>
        <begin position="1"/>
        <end position="226"/>
    </location>
</feature>
<feature type="region of interest" description="NMP" evidence="1">
    <location>
        <begin position="32"/>
        <end position="61"/>
    </location>
</feature>
<feature type="region of interest" description="LID" evidence="1">
    <location>
        <begin position="128"/>
        <end position="171"/>
    </location>
</feature>
<feature type="binding site" evidence="1">
    <location>
        <begin position="12"/>
        <end position="17"/>
    </location>
    <ligand>
        <name>ATP</name>
        <dbReference type="ChEBI" id="CHEBI:30616"/>
    </ligand>
</feature>
<feature type="binding site" evidence="1">
    <location>
        <position position="33"/>
    </location>
    <ligand>
        <name>AMP</name>
        <dbReference type="ChEBI" id="CHEBI:456215"/>
    </ligand>
</feature>
<feature type="binding site" evidence="1">
    <location>
        <position position="38"/>
    </location>
    <ligand>
        <name>AMP</name>
        <dbReference type="ChEBI" id="CHEBI:456215"/>
    </ligand>
</feature>
<feature type="binding site" evidence="1">
    <location>
        <begin position="59"/>
        <end position="61"/>
    </location>
    <ligand>
        <name>AMP</name>
        <dbReference type="ChEBI" id="CHEBI:456215"/>
    </ligand>
</feature>
<feature type="binding site" evidence="1">
    <location>
        <begin position="87"/>
        <end position="90"/>
    </location>
    <ligand>
        <name>AMP</name>
        <dbReference type="ChEBI" id="CHEBI:456215"/>
    </ligand>
</feature>
<feature type="binding site" evidence="1">
    <location>
        <position position="94"/>
    </location>
    <ligand>
        <name>AMP</name>
        <dbReference type="ChEBI" id="CHEBI:456215"/>
    </ligand>
</feature>
<feature type="binding site" evidence="1">
    <location>
        <position position="129"/>
    </location>
    <ligand>
        <name>ATP</name>
        <dbReference type="ChEBI" id="CHEBI:30616"/>
    </ligand>
</feature>
<feature type="binding site" evidence="1">
    <location>
        <position position="168"/>
    </location>
    <ligand>
        <name>AMP</name>
        <dbReference type="ChEBI" id="CHEBI:456215"/>
    </ligand>
</feature>
<feature type="binding site" evidence="1">
    <location>
        <position position="180"/>
    </location>
    <ligand>
        <name>AMP</name>
        <dbReference type="ChEBI" id="CHEBI:456215"/>
    </ligand>
</feature>
<feature type="binding site" evidence="1">
    <location>
        <position position="213"/>
    </location>
    <ligand>
        <name>ATP</name>
        <dbReference type="ChEBI" id="CHEBI:30616"/>
    </ligand>
</feature>